<name>FGF4B_XENLA</name>
<evidence type="ECO:0000255" key="1"/>
<evidence type="ECO:0000269" key="2">
    <source>
    </source>
</evidence>
<evidence type="ECO:0000269" key="3">
    <source>
    </source>
</evidence>
<evidence type="ECO:0000305" key="4"/>
<organism>
    <name type="scientific">Xenopus laevis</name>
    <name type="common">African clawed frog</name>
    <dbReference type="NCBI Taxonomy" id="8355"/>
    <lineage>
        <taxon>Eukaryota</taxon>
        <taxon>Metazoa</taxon>
        <taxon>Chordata</taxon>
        <taxon>Craniata</taxon>
        <taxon>Vertebrata</taxon>
        <taxon>Euteleostomi</taxon>
        <taxon>Amphibia</taxon>
        <taxon>Batrachia</taxon>
        <taxon>Anura</taxon>
        <taxon>Pipoidea</taxon>
        <taxon>Pipidae</taxon>
        <taxon>Xenopodinae</taxon>
        <taxon>Xenopus</taxon>
        <taxon>Xenopus</taxon>
    </lineage>
</organism>
<dbReference type="EMBL" id="X62594">
    <property type="protein sequence ID" value="CAA44480.1"/>
    <property type="molecule type" value="mRNA"/>
</dbReference>
<dbReference type="PIR" id="S54407">
    <property type="entry name" value="S54407"/>
</dbReference>
<dbReference type="SMR" id="P48806"/>
<dbReference type="GeneID" id="378587"/>
<dbReference type="KEGG" id="xla:378587"/>
<dbReference type="AGR" id="Xenbase:XB-GENE-865382"/>
<dbReference type="CTD" id="378587"/>
<dbReference type="Xenbase" id="XB-GENE-865382">
    <property type="gene designation" value="fgf4.S"/>
</dbReference>
<dbReference type="OMA" id="YESHTYP"/>
<dbReference type="OrthoDB" id="5960247at2759"/>
<dbReference type="Proteomes" id="UP000186698">
    <property type="component" value="Chromosome 4S"/>
</dbReference>
<dbReference type="Bgee" id="378587">
    <property type="expression patterns" value="Expressed in neurula embryo"/>
</dbReference>
<dbReference type="GO" id="GO:0005737">
    <property type="term" value="C:cytoplasm"/>
    <property type="evidence" value="ECO:0000318"/>
    <property type="project" value="GO_Central"/>
</dbReference>
<dbReference type="GO" id="GO:0005615">
    <property type="term" value="C:extracellular space"/>
    <property type="evidence" value="ECO:0000318"/>
    <property type="project" value="GO_Central"/>
</dbReference>
<dbReference type="GO" id="GO:0005104">
    <property type="term" value="F:fibroblast growth factor receptor binding"/>
    <property type="evidence" value="ECO:0000318"/>
    <property type="project" value="GO_Central"/>
</dbReference>
<dbReference type="GO" id="GO:0008083">
    <property type="term" value="F:growth factor activity"/>
    <property type="evidence" value="ECO:0000318"/>
    <property type="project" value="GO_Central"/>
</dbReference>
<dbReference type="GO" id="GO:0008543">
    <property type="term" value="P:fibroblast growth factor receptor signaling pathway"/>
    <property type="evidence" value="ECO:0000318"/>
    <property type="project" value="GO_Central"/>
</dbReference>
<dbReference type="GO" id="GO:0022008">
    <property type="term" value="P:neurogenesis"/>
    <property type="evidence" value="ECO:0000318"/>
    <property type="project" value="GO_Central"/>
</dbReference>
<dbReference type="GO" id="GO:0051781">
    <property type="term" value="P:positive regulation of cell division"/>
    <property type="evidence" value="ECO:0007669"/>
    <property type="project" value="UniProtKB-KW"/>
</dbReference>
<dbReference type="GO" id="GO:0008284">
    <property type="term" value="P:positive regulation of cell population proliferation"/>
    <property type="evidence" value="ECO:0000318"/>
    <property type="project" value="GO_Central"/>
</dbReference>
<dbReference type="GO" id="GO:0043410">
    <property type="term" value="P:positive regulation of MAPK cascade"/>
    <property type="evidence" value="ECO:0000318"/>
    <property type="project" value="GO_Central"/>
</dbReference>
<dbReference type="GO" id="GO:0030334">
    <property type="term" value="P:regulation of cell migration"/>
    <property type="evidence" value="ECO:0000318"/>
    <property type="project" value="GO_Central"/>
</dbReference>
<dbReference type="CDD" id="cd23316">
    <property type="entry name" value="beta-trefoil_FGF4"/>
    <property type="match status" value="1"/>
</dbReference>
<dbReference type="FunFam" id="2.80.10.50:FF:000033">
    <property type="entry name" value="Fibroblast growth factor"/>
    <property type="match status" value="1"/>
</dbReference>
<dbReference type="Gene3D" id="2.80.10.50">
    <property type="match status" value="1"/>
</dbReference>
<dbReference type="InterPro" id="IPR002209">
    <property type="entry name" value="Fibroblast_GF_fam"/>
</dbReference>
<dbReference type="InterPro" id="IPR008996">
    <property type="entry name" value="IL1/FGF"/>
</dbReference>
<dbReference type="PANTHER" id="PTHR11486">
    <property type="entry name" value="FIBROBLAST GROWTH FACTOR"/>
    <property type="match status" value="1"/>
</dbReference>
<dbReference type="Pfam" id="PF00167">
    <property type="entry name" value="FGF"/>
    <property type="match status" value="1"/>
</dbReference>
<dbReference type="PRINTS" id="PR00263">
    <property type="entry name" value="HBGFFGF"/>
</dbReference>
<dbReference type="PRINTS" id="PR00262">
    <property type="entry name" value="IL1HBGF"/>
</dbReference>
<dbReference type="SMART" id="SM00442">
    <property type="entry name" value="FGF"/>
    <property type="match status" value="1"/>
</dbReference>
<dbReference type="SUPFAM" id="SSF50353">
    <property type="entry name" value="Cytokine"/>
    <property type="match status" value="1"/>
</dbReference>
<dbReference type="PROSITE" id="PS00247">
    <property type="entry name" value="HBGF_FGF"/>
    <property type="match status" value="1"/>
</dbReference>
<sequence>MTVQLALVPILLLGTAAVMVHCMPFSSSQRNDTLERRWETLFSRSMARIPGEKKDMSRESDYLLGIKRLRRLYCNVGIGFHIQVLPDGRINGMHNENRYSLLEISPVEVGVVSLYGIKSAMFVAMNAKGKLYGSRYFNEECKFKETLLPNNYNAYESRKYPGMYIALGKNGRTKKGNRVSPTMTLTHFLPRI</sequence>
<keyword id="KW-0217">Developmental protein</keyword>
<keyword id="KW-0221">Differentiation</keyword>
<keyword id="KW-0339">Growth factor</keyword>
<keyword id="KW-0497">Mitogen</keyword>
<keyword id="KW-1185">Reference proteome</keyword>
<keyword id="KW-0964">Secreted</keyword>
<keyword id="KW-0732">Signal</keyword>
<feature type="signal peptide" evidence="1">
    <location>
        <begin position="1"/>
        <end position="22"/>
    </location>
</feature>
<feature type="chain" id="PRO_0000008957" description="Fibroblast growth factor 4B">
    <location>
        <begin position="23"/>
        <end position="192"/>
    </location>
</feature>
<protein>
    <recommendedName>
        <fullName>Fibroblast growth factor 4B</fullName>
        <shortName>FGF-4B</shortName>
    </recommendedName>
    <alternativeName>
        <fullName>Embryonic fibroblast growth factor II</fullName>
        <shortName>xEFGF-II</shortName>
    </alternativeName>
    <alternativeName>
        <fullName>Fibroblast growth factor 4-II</fullName>
        <shortName>FGF-4-II</shortName>
    </alternativeName>
    <alternativeName>
        <fullName>Heparin-binding growth factor 4-II</fullName>
        <shortName>HBGF-4-II</shortName>
    </alternativeName>
</protein>
<proteinExistence type="evidence at transcript level"/>
<accession>P48806</accession>
<gene>
    <name type="primary">fgf4-b</name>
</gene>
<comment type="function">
    <text evidence="3">Plays an important role in the regulation of embryonic development, cell proliferation, and cell differentiation. Good candidate for an inducing factor with possible roles both in mesoderm induction at the blastula stage and in the formation of the anteroposterior axis at the gastrula stage.</text>
</comment>
<comment type="subcellular location">
    <subcellularLocation>
        <location evidence="4">Secreted</location>
    </subcellularLocation>
</comment>
<comment type="induction">
    <text evidence="2">By derriere.</text>
</comment>
<comment type="similarity">
    <text evidence="4">Belongs to the heparin-binding growth factors family.</text>
</comment>
<reference key="1">
    <citation type="journal article" date="1992" name="Development">
        <title>Expression of a novel FGF in the Xenopus embryo. A new candidate inducing factor for mesoderm formation and anteroposterior specification.</title>
        <authorList>
            <person name="Isaacs H.V."/>
            <person name="Tannahill D."/>
            <person name="Slack J.M.W."/>
        </authorList>
    </citation>
    <scope>NUCLEOTIDE SEQUENCE [MRNA]</scope>
    <scope>FUNCTION</scope>
</reference>
<reference key="2">
    <citation type="journal article" date="1999" name="Development">
        <title>derriere: a TGF-beta family member required for posterior development in Xenopus.</title>
        <authorList>
            <person name="Sun B.I."/>
            <person name="Bush S.M."/>
            <person name="Collins-Racie L.A."/>
            <person name="LaVallie E.R."/>
            <person name="DiBlasio-Smith E.A."/>
            <person name="Wolfman N.M."/>
            <person name="McCoy J.M."/>
            <person name="Sive H.L."/>
        </authorList>
    </citation>
    <scope>INDUCTION</scope>
</reference>